<proteinExistence type="evidence at protein level"/>
<gene>
    <name type="primary">MCM16</name>
    <name type="ordered locus">YPR046W</name>
</gene>
<sequence>MTNSSEKQWERIQQLEKEHVEVYRELLITLDRLYLIRKHNHAVILSHTQQRLLEIRHQLQINLEKTALLIRLLEKPDNTNVLFTKLQNLLEESNSLDYELLQSLGAQSSLHKQLIESRAERDELMSKLIELSSKFPKPTIPPDDSDTAGKQVEVEKENETIQELMIALQIHSGYTNISYTI</sequence>
<name>CENPH_YEAST</name>
<protein>
    <recommendedName>
        <fullName evidence="8">Inner kinetochore subunit MCM16</fullName>
    </recommendedName>
    <alternativeName>
        <fullName evidence="7">CENP-H homolog</fullName>
    </alternativeName>
    <alternativeName>
        <fullName evidence="8">Constitutive centromere-associated network protein MCM16</fullName>
    </alternativeName>
    <alternativeName>
        <fullName>Minichromosome maintenance protein 16</fullName>
    </alternativeName>
</protein>
<organism>
    <name type="scientific">Saccharomyces cerevisiae (strain ATCC 204508 / S288c)</name>
    <name type="common">Baker's yeast</name>
    <dbReference type="NCBI Taxonomy" id="559292"/>
    <lineage>
        <taxon>Eukaryota</taxon>
        <taxon>Fungi</taxon>
        <taxon>Dikarya</taxon>
        <taxon>Ascomycota</taxon>
        <taxon>Saccharomycotina</taxon>
        <taxon>Saccharomycetes</taxon>
        <taxon>Saccharomycetales</taxon>
        <taxon>Saccharomycetaceae</taxon>
        <taxon>Saccharomyces</taxon>
    </lineage>
</organism>
<feature type="chain" id="PRO_0000096281" description="Inner kinetochore subunit MCM16">
    <location>
        <begin position="1"/>
        <end position="181"/>
    </location>
</feature>
<feature type="coiled-coil region" evidence="1">
    <location>
        <begin position="112"/>
        <end position="171"/>
    </location>
</feature>
<feature type="helix" evidence="9">
    <location>
        <begin position="4"/>
        <end position="38"/>
    </location>
</feature>
<feature type="strand" evidence="9">
    <location>
        <begin position="39"/>
        <end position="41"/>
    </location>
</feature>
<feature type="helix" evidence="9">
    <location>
        <begin position="47"/>
        <end position="65"/>
    </location>
</feature>
<feature type="helix" evidence="9">
    <location>
        <begin position="68"/>
        <end position="71"/>
    </location>
</feature>
<feature type="strand" evidence="9">
    <location>
        <begin position="78"/>
        <end position="80"/>
    </location>
</feature>
<feature type="helix" evidence="9">
    <location>
        <begin position="83"/>
        <end position="93"/>
    </location>
</feature>
<feature type="turn" evidence="9">
    <location>
        <begin position="94"/>
        <end position="96"/>
    </location>
</feature>
<feature type="helix" evidence="9">
    <location>
        <begin position="97"/>
        <end position="105"/>
    </location>
</feature>
<feature type="turn" evidence="9">
    <location>
        <begin position="106"/>
        <end position="109"/>
    </location>
</feature>
<feature type="helix" evidence="9">
    <location>
        <begin position="110"/>
        <end position="133"/>
    </location>
</feature>
<feature type="helix" evidence="10">
    <location>
        <begin position="151"/>
        <end position="171"/>
    </location>
</feature>
<accession>Q12262</accession>
<accession>D6W454</accession>
<comment type="function">
    <text evidence="6">Component of the kinetochore, a multiprotein complex that assembles on centromeric DNA and attaches chromosomes to spindle microtubules, mediating chromosome segregation and sister chromatid segregation during meiosis and mitosis. Component of the inner kinetochore constitutive centromere-associated network (CCAN), which serves as a structural platform for outer kinetochore assembly.</text>
</comment>
<comment type="subunit">
    <text evidence="2 3 5">Component of the heterotrimeric kinetochore subcomplex CTF3, which consists of CTF3, MCM16 and MCM22 (PubMed:11782448). The CTF3 subcomplex is part of a larger constitutive centromere-associated network (CCAN) (also known as central kinetochore CTF19 complex in yeast), which is composed of at least AME1, CHL4, CNN1, CTF3, CTF19, IML3, MCM16, MCM21, MCM22, MHF1, MHF2, MIF2, NKP1, NKP2, OKP1 and WIP1 (PubMed:12408861, PubMed:22561346). Interacts with CTF19 (PubMed:11782448).</text>
</comment>
<comment type="interaction">
    <interactant intactId="EBI-31487">
        <id>Q12262</id>
    </interactant>
    <interactant intactId="EBI-5199">
        <id>Q02732</id>
        <label>CTF19</label>
    </interactant>
    <organismsDiffer>false</organismsDiffer>
    <experiments>3</experiments>
</comment>
<comment type="interaction">
    <interactant intactId="EBI-31487">
        <id>Q12262</id>
    </interactant>
    <interactant intactId="EBI-30457">
        <id>Q12748</id>
        <label>CTF3</label>
    </interactant>
    <organismsDiffer>false</organismsDiffer>
    <experiments>4</experiments>
</comment>
<comment type="interaction">
    <interactant intactId="EBI-31487">
        <id>Q12262</id>
    </interactant>
    <interactant intactId="EBI-25691">
        <id>P47167</id>
        <label>MCM22</label>
    </interactant>
    <organismsDiffer>false</organismsDiffer>
    <experiments>7</experiments>
</comment>
<comment type="subcellular location">
    <subcellularLocation>
        <location>Nucleus</location>
    </subcellularLocation>
    <subcellularLocation>
        <location>Chromosome</location>
        <location>Centromere</location>
        <location>Kinetochore</location>
    </subcellularLocation>
    <text>Associated with kinetochores.</text>
</comment>
<comment type="miscellaneous">
    <text evidence="4">Present with 279 molecules/cell in log phase SD medium.</text>
</comment>
<comment type="similarity">
    <text evidence="1">Belongs to the CENP-H/MCM16 family.</text>
</comment>
<keyword id="KW-0002">3D-structure</keyword>
<keyword id="KW-0131">Cell cycle</keyword>
<keyword id="KW-0132">Cell division</keyword>
<keyword id="KW-0137">Centromere</keyword>
<keyword id="KW-0158">Chromosome</keyword>
<keyword id="KW-0175">Coiled coil</keyword>
<keyword id="KW-0995">Kinetochore</keyword>
<keyword id="KW-0469">Meiosis</keyword>
<keyword id="KW-0498">Mitosis</keyword>
<keyword id="KW-0539">Nucleus</keyword>
<keyword id="KW-1185">Reference proteome</keyword>
<evidence type="ECO:0000255" key="1"/>
<evidence type="ECO:0000269" key="2">
    <source>
    </source>
</evidence>
<evidence type="ECO:0000269" key="3">
    <source>
    </source>
</evidence>
<evidence type="ECO:0000269" key="4">
    <source>
    </source>
</evidence>
<evidence type="ECO:0000269" key="5">
    <source>
    </source>
</evidence>
<evidence type="ECO:0000269" key="6">
    <source>
    </source>
</evidence>
<evidence type="ECO:0000303" key="7">
    <source>
    </source>
</evidence>
<evidence type="ECO:0000305" key="8"/>
<evidence type="ECO:0007829" key="9">
    <source>
        <dbReference type="PDB" id="6WUC"/>
    </source>
</evidence>
<evidence type="ECO:0007829" key="10">
    <source>
        <dbReference type="PDB" id="6YPC"/>
    </source>
</evidence>
<dbReference type="EMBL" id="Z49219">
    <property type="protein sequence ID" value="CAA89166.1"/>
    <property type="molecule type" value="Genomic_DNA"/>
</dbReference>
<dbReference type="EMBL" id="Z71255">
    <property type="protein sequence ID" value="CAA94993.1"/>
    <property type="molecule type" value="Genomic_DNA"/>
</dbReference>
<dbReference type="EMBL" id="BK006949">
    <property type="protein sequence ID" value="DAA11470.1"/>
    <property type="molecule type" value="Genomic_DNA"/>
</dbReference>
<dbReference type="PIR" id="S54070">
    <property type="entry name" value="S54070"/>
</dbReference>
<dbReference type="RefSeq" id="NP_015371.1">
    <property type="nucleotide sequence ID" value="NM_001184143.1"/>
</dbReference>
<dbReference type="PDB" id="6OUA">
    <property type="method" value="EM"/>
    <property type="resolution" value="4.18 A"/>
    <property type="chains" value="H=1-181"/>
</dbReference>
<dbReference type="PDB" id="6QLD">
    <property type="method" value="EM"/>
    <property type="resolution" value="4.15 A"/>
    <property type="chains" value="H=4-136"/>
</dbReference>
<dbReference type="PDB" id="6QLE">
    <property type="method" value="EM"/>
    <property type="resolution" value="3.55 A"/>
    <property type="chains" value="H=1-136"/>
</dbReference>
<dbReference type="PDB" id="6WUC">
    <property type="method" value="EM"/>
    <property type="resolution" value="3.23 A"/>
    <property type="chains" value="H=1-181"/>
</dbReference>
<dbReference type="PDB" id="6YPC">
    <property type="method" value="X-ray"/>
    <property type="resolution" value="2.90 A"/>
    <property type="chains" value="H=137-181"/>
</dbReference>
<dbReference type="PDB" id="7L7Q">
    <property type="method" value="EM"/>
    <property type="resolution" value="3.70 A"/>
    <property type="chains" value="H=1-181"/>
</dbReference>
<dbReference type="PDB" id="8OVW">
    <property type="method" value="EM"/>
    <property type="resolution" value="3.40 A"/>
    <property type="chains" value="H=1-181"/>
</dbReference>
<dbReference type="PDB" id="8OW0">
    <property type="method" value="EM"/>
    <property type="resolution" value="3.40 A"/>
    <property type="chains" value="H=1-181"/>
</dbReference>
<dbReference type="PDB" id="8OW1">
    <property type="method" value="EM"/>
    <property type="resolution" value="3.70 A"/>
    <property type="chains" value="H/HH=1-181"/>
</dbReference>
<dbReference type="PDBsum" id="6OUA"/>
<dbReference type="PDBsum" id="6QLD"/>
<dbReference type="PDBsum" id="6QLE"/>
<dbReference type="PDBsum" id="6WUC"/>
<dbReference type="PDBsum" id="6YPC"/>
<dbReference type="PDBsum" id="7L7Q"/>
<dbReference type="PDBsum" id="8OVW"/>
<dbReference type="PDBsum" id="8OW0"/>
<dbReference type="PDBsum" id="8OW1"/>
<dbReference type="EMDB" id="EMD-17224"/>
<dbReference type="EMDB" id="EMD-17226"/>
<dbReference type="EMDB" id="EMD-17227"/>
<dbReference type="EMDB" id="EMD-20200"/>
<dbReference type="EMDB" id="EMD-21910"/>
<dbReference type="EMDB" id="EMD-23216"/>
<dbReference type="EMDB" id="EMD-4579"/>
<dbReference type="SMR" id="Q12262"/>
<dbReference type="BioGRID" id="36222">
    <property type="interactions" value="238"/>
</dbReference>
<dbReference type="ComplexPortal" id="CPX-1156">
    <property type="entry name" value="Central kinetochore CTF19 complex"/>
</dbReference>
<dbReference type="ComplexPortal" id="CPX-2533">
    <property type="entry name" value="Kinetochore CCAN complex"/>
</dbReference>
<dbReference type="DIP" id="DIP-1430N"/>
<dbReference type="FunCoup" id="Q12262">
    <property type="interactions" value="98"/>
</dbReference>
<dbReference type="IntAct" id="Q12262">
    <property type="interactions" value="19"/>
</dbReference>
<dbReference type="MINT" id="Q12262"/>
<dbReference type="STRING" id="4932.YPR046W"/>
<dbReference type="iPTMnet" id="Q12262"/>
<dbReference type="PaxDb" id="4932-YPR046W"/>
<dbReference type="PeptideAtlas" id="Q12262"/>
<dbReference type="EnsemblFungi" id="YPR046W_mRNA">
    <property type="protein sequence ID" value="YPR046W"/>
    <property type="gene ID" value="YPR046W"/>
</dbReference>
<dbReference type="GeneID" id="856159"/>
<dbReference type="KEGG" id="sce:YPR046W"/>
<dbReference type="AGR" id="SGD:S000006250"/>
<dbReference type="SGD" id="S000006250">
    <property type="gene designation" value="MCM16"/>
</dbReference>
<dbReference type="VEuPathDB" id="FungiDB:YPR046W"/>
<dbReference type="eggNOG" id="ENOG502S9DX">
    <property type="taxonomic scope" value="Eukaryota"/>
</dbReference>
<dbReference type="HOGENOM" id="CLU_096885_0_0_1"/>
<dbReference type="InParanoid" id="Q12262"/>
<dbReference type="OMA" id="QIHSGYT"/>
<dbReference type="OrthoDB" id="4035717at2759"/>
<dbReference type="BioCyc" id="YEAST:G3O-34201-MONOMER"/>
<dbReference type="BioGRID-ORCS" id="856159">
    <property type="hits" value="0 hits in 10 CRISPR screens"/>
</dbReference>
<dbReference type="PRO" id="PR:Q12262"/>
<dbReference type="Proteomes" id="UP000002311">
    <property type="component" value="Chromosome XVI"/>
</dbReference>
<dbReference type="RNAct" id="Q12262">
    <property type="molecule type" value="protein"/>
</dbReference>
<dbReference type="GO" id="GO:0000776">
    <property type="term" value="C:kinetochore"/>
    <property type="evidence" value="ECO:0000314"/>
    <property type="project" value="SGD"/>
</dbReference>
<dbReference type="GO" id="GO:0005634">
    <property type="term" value="C:nucleus"/>
    <property type="evidence" value="ECO:0007669"/>
    <property type="project" value="UniProtKB-SubCell"/>
</dbReference>
<dbReference type="GO" id="GO:0008608">
    <property type="term" value="P:attachment of spindle microtubules to kinetochore"/>
    <property type="evidence" value="ECO:0000303"/>
    <property type="project" value="ComplexPortal"/>
</dbReference>
<dbReference type="GO" id="GO:0051301">
    <property type="term" value="P:cell division"/>
    <property type="evidence" value="ECO:0007669"/>
    <property type="project" value="UniProtKB-KW"/>
</dbReference>
<dbReference type="GO" id="GO:0007059">
    <property type="term" value="P:chromosome segregation"/>
    <property type="evidence" value="ECO:0000315"/>
    <property type="project" value="SGD"/>
</dbReference>
<dbReference type="GO" id="GO:0034087">
    <property type="term" value="P:establishment of mitotic sister chromatid cohesion"/>
    <property type="evidence" value="ECO:0000315"/>
    <property type="project" value="SGD"/>
</dbReference>
<dbReference type="GO" id="GO:0051321">
    <property type="term" value="P:meiotic cell cycle"/>
    <property type="evidence" value="ECO:0007669"/>
    <property type="project" value="UniProtKB-KW"/>
</dbReference>
<dbReference type="InterPro" id="IPR048744">
    <property type="entry name" value="MCM16"/>
</dbReference>
<dbReference type="Pfam" id="PF20993">
    <property type="entry name" value="CENPH"/>
    <property type="match status" value="1"/>
</dbReference>
<reference key="1">
    <citation type="journal article" date="1997" name="Nature">
        <title>The nucleotide sequence of Saccharomyces cerevisiae chromosome XVI.</title>
        <authorList>
            <person name="Bussey H."/>
            <person name="Storms R.K."/>
            <person name="Ahmed A."/>
            <person name="Albermann K."/>
            <person name="Allen E."/>
            <person name="Ansorge W."/>
            <person name="Araujo R."/>
            <person name="Aparicio A."/>
            <person name="Barrell B.G."/>
            <person name="Badcock K."/>
            <person name="Benes V."/>
            <person name="Botstein D."/>
            <person name="Bowman S."/>
            <person name="Brueckner M."/>
            <person name="Carpenter J."/>
            <person name="Cherry J.M."/>
            <person name="Chung E."/>
            <person name="Churcher C.M."/>
            <person name="Coster F."/>
            <person name="Davis K."/>
            <person name="Davis R.W."/>
            <person name="Dietrich F.S."/>
            <person name="Delius H."/>
            <person name="DiPaolo T."/>
            <person name="Dubois E."/>
            <person name="Duesterhoeft A."/>
            <person name="Duncan M."/>
            <person name="Floeth M."/>
            <person name="Fortin N."/>
            <person name="Friesen J.D."/>
            <person name="Fritz C."/>
            <person name="Goffeau A."/>
            <person name="Hall J."/>
            <person name="Hebling U."/>
            <person name="Heumann K."/>
            <person name="Hilbert H."/>
            <person name="Hillier L.W."/>
            <person name="Hunicke-Smith S."/>
            <person name="Hyman R.W."/>
            <person name="Johnston M."/>
            <person name="Kalman S."/>
            <person name="Kleine K."/>
            <person name="Komp C."/>
            <person name="Kurdi O."/>
            <person name="Lashkari D."/>
            <person name="Lew H."/>
            <person name="Lin A."/>
            <person name="Lin D."/>
            <person name="Louis E.J."/>
            <person name="Marathe R."/>
            <person name="Messenguy F."/>
            <person name="Mewes H.-W."/>
            <person name="Mirtipati S."/>
            <person name="Moestl D."/>
            <person name="Mueller-Auer S."/>
            <person name="Namath A."/>
            <person name="Nentwich U."/>
            <person name="Oefner P."/>
            <person name="Pearson D."/>
            <person name="Petel F.X."/>
            <person name="Pohl T.M."/>
            <person name="Purnelle B."/>
            <person name="Rajandream M.A."/>
            <person name="Rechmann S."/>
            <person name="Rieger M."/>
            <person name="Riles L."/>
            <person name="Roberts D."/>
            <person name="Schaefer M."/>
            <person name="Scharfe M."/>
            <person name="Scherens B."/>
            <person name="Schramm S."/>
            <person name="Schroeder M."/>
            <person name="Sdicu A.-M."/>
            <person name="Tettelin H."/>
            <person name="Urrestarazu L.A."/>
            <person name="Ushinsky S."/>
            <person name="Vierendeels F."/>
            <person name="Vissers S."/>
            <person name="Voss H."/>
            <person name="Walsh S.V."/>
            <person name="Wambutt R."/>
            <person name="Wang Y."/>
            <person name="Wedler E."/>
            <person name="Wedler H."/>
            <person name="Winnett E."/>
            <person name="Zhong W.-W."/>
            <person name="Zollner A."/>
            <person name="Vo D.H."/>
            <person name="Hani J."/>
        </authorList>
    </citation>
    <scope>NUCLEOTIDE SEQUENCE [LARGE SCALE GENOMIC DNA]</scope>
    <source>
        <strain>ATCC 204508 / S288c</strain>
    </source>
</reference>
<reference key="2">
    <citation type="journal article" date="2014" name="G3 (Bethesda)">
        <title>The reference genome sequence of Saccharomyces cerevisiae: Then and now.</title>
        <authorList>
            <person name="Engel S.R."/>
            <person name="Dietrich F.S."/>
            <person name="Fisk D.G."/>
            <person name="Binkley G."/>
            <person name="Balakrishnan R."/>
            <person name="Costanzo M.C."/>
            <person name="Dwight S.S."/>
            <person name="Hitz B.C."/>
            <person name="Karra K."/>
            <person name="Nash R.S."/>
            <person name="Weng S."/>
            <person name="Wong E.D."/>
            <person name="Lloyd P."/>
            <person name="Skrzypek M.S."/>
            <person name="Miyasato S.R."/>
            <person name="Simison M."/>
            <person name="Cherry J.M."/>
        </authorList>
    </citation>
    <scope>GENOME REANNOTATION</scope>
    <source>
        <strain>ATCC 204508 / S288c</strain>
    </source>
</reference>
<reference key="3">
    <citation type="journal article" date="1998" name="Mol. Gen. Genet.">
        <title>The MCM16 gene of the yeast Saccharomyces cerevisiae is required for chromosome segregation.</title>
        <authorList>
            <person name="Sanyal K."/>
            <person name="Ghosh S.K."/>
            <person name="Sinha P."/>
        </authorList>
    </citation>
    <scope>FUNCTION</scope>
</reference>
<reference key="4">
    <citation type="journal article" date="2002" name="Cell">
        <title>Phospho-regulation of kinetochore-microtubule attachments by the Aurora kinase Ipl1p.</title>
        <authorList>
            <person name="Cheeseman I.M."/>
            <person name="Anderson S."/>
            <person name="Jwa M."/>
            <person name="Green E.M."/>
            <person name="Kang J.-S."/>
            <person name="Yates J.R. III"/>
            <person name="Chan C.S.M."/>
            <person name="Drubin D.G."/>
            <person name="Barnes G."/>
        </authorList>
    </citation>
    <scope>IDENTIFICATION BY MASS SPECTROMETRY</scope>
    <scope>COMPONENT OF CTF19 COMPLEX</scope>
</reference>
<reference key="5">
    <citation type="journal article" date="2002" name="Genes Dev.">
        <title>Ctf3p, the Mis6 budding yeast homolog, interacts with Mcm22p and Mcm16p at the yeast outer kinetochore.</title>
        <authorList>
            <person name="Measday V."/>
            <person name="Hailey D.W."/>
            <person name="Pot I."/>
            <person name="Givan S.A."/>
            <person name="Hyland K.M."/>
            <person name="Cagney G."/>
            <person name="Fields S."/>
            <person name="Davis T.N."/>
            <person name="Hieter P."/>
        </authorList>
    </citation>
    <scope>INTERACTION WITH CTF3; CTF19 AND MCM22</scope>
    <scope>SUBCELLULAR LOCATION</scope>
</reference>
<reference key="6">
    <citation type="journal article" date="2003" name="Nature">
        <title>Global analysis of protein localization in budding yeast.</title>
        <authorList>
            <person name="Huh W.-K."/>
            <person name="Falvo J.V."/>
            <person name="Gerke L.C."/>
            <person name="Carroll A.S."/>
            <person name="Howson R.W."/>
            <person name="Weissman J.S."/>
            <person name="O'Shea E.K."/>
        </authorList>
    </citation>
    <scope>SUBCELLULAR LOCATION [LARGE SCALE ANALYSIS]</scope>
</reference>
<reference key="7">
    <citation type="journal article" date="2003" name="Nature">
        <title>Global analysis of protein expression in yeast.</title>
        <authorList>
            <person name="Ghaemmaghami S."/>
            <person name="Huh W.-K."/>
            <person name="Bower K."/>
            <person name="Howson R.W."/>
            <person name="Belle A."/>
            <person name="Dephoure N."/>
            <person name="O'Shea E.K."/>
            <person name="Weissman J.S."/>
        </authorList>
    </citation>
    <scope>LEVEL OF PROTEIN EXPRESSION [LARGE SCALE ANALYSIS]</scope>
</reference>
<reference key="8">
    <citation type="journal article" date="2012" name="Nat. Cell Biol.">
        <title>CENP-T proteins are conserved centromere receptors of the Ndc80 complex.</title>
        <authorList>
            <person name="Schleiffer A."/>
            <person name="Maier M."/>
            <person name="Litos G."/>
            <person name="Lampert F."/>
            <person name="Hornung P."/>
            <person name="Mechtler K."/>
            <person name="Westermann S."/>
        </authorList>
    </citation>
    <scope>IDENTIFICATION IN CCAN</scope>
    <scope>SUBUNIT</scope>
</reference>